<accession>Q7NBB2</accession>
<gene>
    <name evidence="1" type="primary">rplU</name>
    <name type="ordered locus">MYCGA3670</name>
    <name type="ORF">MGA_1290</name>
</gene>
<dbReference type="EMBL" id="AE015450">
    <property type="protein sequence ID" value="AAP56717.2"/>
    <property type="molecule type" value="Genomic_DNA"/>
</dbReference>
<dbReference type="RefSeq" id="WP_011113613.1">
    <property type="nucleotide sequence ID" value="NC_004829.2"/>
</dbReference>
<dbReference type="SMR" id="Q7NBB2"/>
<dbReference type="GeneID" id="93510197"/>
<dbReference type="KEGG" id="mga:MGA_1290"/>
<dbReference type="PATRIC" id="fig|233150.7.peg.412"/>
<dbReference type="HOGENOM" id="CLU_061463_3_1_14"/>
<dbReference type="OrthoDB" id="9813334at2"/>
<dbReference type="Proteomes" id="UP000001418">
    <property type="component" value="Chromosome"/>
</dbReference>
<dbReference type="GO" id="GO:0005737">
    <property type="term" value="C:cytoplasm"/>
    <property type="evidence" value="ECO:0007669"/>
    <property type="project" value="UniProtKB-ARBA"/>
</dbReference>
<dbReference type="GO" id="GO:1990904">
    <property type="term" value="C:ribonucleoprotein complex"/>
    <property type="evidence" value="ECO:0007669"/>
    <property type="project" value="UniProtKB-KW"/>
</dbReference>
<dbReference type="GO" id="GO:0005840">
    <property type="term" value="C:ribosome"/>
    <property type="evidence" value="ECO:0007669"/>
    <property type="project" value="UniProtKB-KW"/>
</dbReference>
<dbReference type="GO" id="GO:0019843">
    <property type="term" value="F:rRNA binding"/>
    <property type="evidence" value="ECO:0007669"/>
    <property type="project" value="UniProtKB-UniRule"/>
</dbReference>
<dbReference type="GO" id="GO:0003735">
    <property type="term" value="F:structural constituent of ribosome"/>
    <property type="evidence" value="ECO:0007669"/>
    <property type="project" value="InterPro"/>
</dbReference>
<dbReference type="GO" id="GO:0006412">
    <property type="term" value="P:translation"/>
    <property type="evidence" value="ECO:0007669"/>
    <property type="project" value="UniProtKB-UniRule"/>
</dbReference>
<dbReference type="HAMAP" id="MF_01363">
    <property type="entry name" value="Ribosomal_bL21"/>
    <property type="match status" value="1"/>
</dbReference>
<dbReference type="InterPro" id="IPR028909">
    <property type="entry name" value="bL21-like"/>
</dbReference>
<dbReference type="InterPro" id="IPR036164">
    <property type="entry name" value="bL21-like_sf"/>
</dbReference>
<dbReference type="InterPro" id="IPR001787">
    <property type="entry name" value="Ribosomal_bL21"/>
</dbReference>
<dbReference type="InterPro" id="IPR018258">
    <property type="entry name" value="Ribosomal_bL21_CS"/>
</dbReference>
<dbReference type="NCBIfam" id="TIGR00061">
    <property type="entry name" value="L21"/>
    <property type="match status" value="1"/>
</dbReference>
<dbReference type="PANTHER" id="PTHR21349">
    <property type="entry name" value="50S RIBOSOMAL PROTEIN L21"/>
    <property type="match status" value="1"/>
</dbReference>
<dbReference type="PANTHER" id="PTHR21349:SF0">
    <property type="entry name" value="LARGE RIBOSOMAL SUBUNIT PROTEIN BL21M"/>
    <property type="match status" value="1"/>
</dbReference>
<dbReference type="Pfam" id="PF00829">
    <property type="entry name" value="Ribosomal_L21p"/>
    <property type="match status" value="1"/>
</dbReference>
<dbReference type="SUPFAM" id="SSF141091">
    <property type="entry name" value="L21p-like"/>
    <property type="match status" value="1"/>
</dbReference>
<dbReference type="PROSITE" id="PS01169">
    <property type="entry name" value="RIBOSOMAL_L21"/>
    <property type="match status" value="1"/>
</dbReference>
<sequence>MFAVIASGSKQYRVKLNDEIYVEKLNSQVGEKIVFDKVYFVNNTFGKPFVKGASVTCEVLKQGRQKKINVIKHISQKHHLKKYGHRQPYTKLKVVAINHG</sequence>
<evidence type="ECO:0000255" key="1">
    <source>
        <dbReference type="HAMAP-Rule" id="MF_01363"/>
    </source>
</evidence>
<evidence type="ECO:0000305" key="2"/>
<proteinExistence type="inferred from homology"/>
<reference key="1">
    <citation type="journal article" date="2003" name="Microbiology">
        <title>The complete genome sequence of the avian pathogen Mycoplasma gallisepticum strain R(low).</title>
        <authorList>
            <person name="Papazisi L."/>
            <person name="Gorton T.S."/>
            <person name="Kutish G."/>
            <person name="Markham P.F."/>
            <person name="Browning G.F."/>
            <person name="Nguyen D.K."/>
            <person name="Swartzell S."/>
            <person name="Madan A."/>
            <person name="Mahairas G."/>
            <person name="Geary S.J."/>
        </authorList>
    </citation>
    <scope>NUCLEOTIDE SEQUENCE [LARGE SCALE GENOMIC DNA]</scope>
    <source>
        <strain>R(low / passage 15 / clone 2)</strain>
    </source>
</reference>
<feature type="chain" id="PRO_0000270688" description="Large ribosomal subunit protein bL21">
    <location>
        <begin position="1"/>
        <end position="100"/>
    </location>
</feature>
<keyword id="KW-1185">Reference proteome</keyword>
<keyword id="KW-0687">Ribonucleoprotein</keyword>
<keyword id="KW-0689">Ribosomal protein</keyword>
<keyword id="KW-0694">RNA-binding</keyword>
<keyword id="KW-0699">rRNA-binding</keyword>
<protein>
    <recommendedName>
        <fullName evidence="1">Large ribosomal subunit protein bL21</fullName>
    </recommendedName>
    <alternativeName>
        <fullName evidence="2">50S ribosomal protein L21</fullName>
    </alternativeName>
</protein>
<comment type="function">
    <text evidence="1">This protein binds to 23S rRNA in the presence of protein L20.</text>
</comment>
<comment type="subunit">
    <text evidence="1">Part of the 50S ribosomal subunit. Contacts protein L20.</text>
</comment>
<comment type="similarity">
    <text evidence="1">Belongs to the bacterial ribosomal protein bL21 family.</text>
</comment>
<organism>
    <name type="scientific">Mycoplasmoides gallisepticum (strain R(low / passage 15 / clone 2))</name>
    <name type="common">Mycoplasma gallisepticum</name>
    <dbReference type="NCBI Taxonomy" id="710127"/>
    <lineage>
        <taxon>Bacteria</taxon>
        <taxon>Bacillati</taxon>
        <taxon>Mycoplasmatota</taxon>
        <taxon>Mycoplasmoidales</taxon>
        <taxon>Mycoplasmoidaceae</taxon>
        <taxon>Mycoplasmoides</taxon>
    </lineage>
</organism>
<name>RL21_MYCGA</name>